<comment type="function">
    <text evidence="1">Binds to the 23S rRNA.</text>
</comment>
<comment type="similarity">
    <text evidence="1">Belongs to the bacterial ribosomal protein bL9 family.</text>
</comment>
<protein>
    <recommendedName>
        <fullName evidence="1">Large ribosomal subunit protein bL9</fullName>
    </recommendedName>
    <alternativeName>
        <fullName evidence="2">50S ribosomal protein L9</fullName>
    </alternativeName>
</protein>
<name>RL9_NITEU</name>
<dbReference type="EMBL" id="AL954747">
    <property type="protein sequence ID" value="CAD84106.1"/>
    <property type="molecule type" value="Genomic_DNA"/>
</dbReference>
<dbReference type="RefSeq" id="WP_011110840.1">
    <property type="nucleotide sequence ID" value="NC_004757.1"/>
</dbReference>
<dbReference type="SMR" id="Q82XQ9"/>
<dbReference type="STRING" id="228410.NE0195"/>
<dbReference type="GeneID" id="87103402"/>
<dbReference type="KEGG" id="neu:NE0195"/>
<dbReference type="eggNOG" id="COG0359">
    <property type="taxonomic scope" value="Bacteria"/>
</dbReference>
<dbReference type="HOGENOM" id="CLU_078938_4_1_4"/>
<dbReference type="OrthoDB" id="9788336at2"/>
<dbReference type="PhylomeDB" id="Q82XQ9"/>
<dbReference type="Proteomes" id="UP000001416">
    <property type="component" value="Chromosome"/>
</dbReference>
<dbReference type="GO" id="GO:1990904">
    <property type="term" value="C:ribonucleoprotein complex"/>
    <property type="evidence" value="ECO:0007669"/>
    <property type="project" value="UniProtKB-KW"/>
</dbReference>
<dbReference type="GO" id="GO:0005840">
    <property type="term" value="C:ribosome"/>
    <property type="evidence" value="ECO:0007669"/>
    <property type="project" value="UniProtKB-KW"/>
</dbReference>
<dbReference type="GO" id="GO:0019843">
    <property type="term" value="F:rRNA binding"/>
    <property type="evidence" value="ECO:0007669"/>
    <property type="project" value="UniProtKB-UniRule"/>
</dbReference>
<dbReference type="GO" id="GO:0003735">
    <property type="term" value="F:structural constituent of ribosome"/>
    <property type="evidence" value="ECO:0007669"/>
    <property type="project" value="InterPro"/>
</dbReference>
<dbReference type="GO" id="GO:0006412">
    <property type="term" value="P:translation"/>
    <property type="evidence" value="ECO:0007669"/>
    <property type="project" value="UniProtKB-UniRule"/>
</dbReference>
<dbReference type="Gene3D" id="3.10.430.100">
    <property type="entry name" value="Ribosomal protein L9, C-terminal domain"/>
    <property type="match status" value="1"/>
</dbReference>
<dbReference type="Gene3D" id="3.40.5.10">
    <property type="entry name" value="Ribosomal protein L9, N-terminal domain"/>
    <property type="match status" value="1"/>
</dbReference>
<dbReference type="HAMAP" id="MF_00503">
    <property type="entry name" value="Ribosomal_bL9"/>
    <property type="match status" value="1"/>
</dbReference>
<dbReference type="InterPro" id="IPR000244">
    <property type="entry name" value="Ribosomal_bL9"/>
</dbReference>
<dbReference type="InterPro" id="IPR009027">
    <property type="entry name" value="Ribosomal_bL9/RNase_H1_N"/>
</dbReference>
<dbReference type="InterPro" id="IPR020594">
    <property type="entry name" value="Ribosomal_bL9_bac/chp"/>
</dbReference>
<dbReference type="InterPro" id="IPR020069">
    <property type="entry name" value="Ribosomal_bL9_C"/>
</dbReference>
<dbReference type="InterPro" id="IPR036791">
    <property type="entry name" value="Ribosomal_bL9_C_sf"/>
</dbReference>
<dbReference type="InterPro" id="IPR020070">
    <property type="entry name" value="Ribosomal_bL9_N"/>
</dbReference>
<dbReference type="InterPro" id="IPR036935">
    <property type="entry name" value="Ribosomal_bL9_N_sf"/>
</dbReference>
<dbReference type="NCBIfam" id="TIGR00158">
    <property type="entry name" value="L9"/>
    <property type="match status" value="1"/>
</dbReference>
<dbReference type="PANTHER" id="PTHR21368">
    <property type="entry name" value="50S RIBOSOMAL PROTEIN L9"/>
    <property type="match status" value="1"/>
</dbReference>
<dbReference type="Pfam" id="PF03948">
    <property type="entry name" value="Ribosomal_L9_C"/>
    <property type="match status" value="1"/>
</dbReference>
<dbReference type="Pfam" id="PF01281">
    <property type="entry name" value="Ribosomal_L9_N"/>
    <property type="match status" value="1"/>
</dbReference>
<dbReference type="SUPFAM" id="SSF55658">
    <property type="entry name" value="L9 N-domain-like"/>
    <property type="match status" value="1"/>
</dbReference>
<dbReference type="SUPFAM" id="SSF55653">
    <property type="entry name" value="Ribosomal protein L9 C-domain"/>
    <property type="match status" value="1"/>
</dbReference>
<dbReference type="PROSITE" id="PS00651">
    <property type="entry name" value="RIBOSOMAL_L9"/>
    <property type="match status" value="1"/>
</dbReference>
<accession>Q82XQ9</accession>
<keyword id="KW-1185">Reference proteome</keyword>
<keyword id="KW-0687">Ribonucleoprotein</keyword>
<keyword id="KW-0689">Ribosomal protein</keyword>
<keyword id="KW-0694">RNA-binding</keyword>
<keyword id="KW-0699">rRNA-binding</keyword>
<reference key="1">
    <citation type="journal article" date="2003" name="J. Bacteriol.">
        <title>Complete genome sequence of the ammonia-oxidizing bacterium and obligate chemolithoautotroph Nitrosomonas europaea.</title>
        <authorList>
            <person name="Chain P."/>
            <person name="Lamerdin J.E."/>
            <person name="Larimer F.W."/>
            <person name="Regala W."/>
            <person name="Lao V."/>
            <person name="Land M.L."/>
            <person name="Hauser L."/>
            <person name="Hooper A.B."/>
            <person name="Klotz M.G."/>
            <person name="Norton J."/>
            <person name="Sayavedra-Soto L.A."/>
            <person name="Arciero D.M."/>
            <person name="Hommes N.G."/>
            <person name="Whittaker M.M."/>
            <person name="Arp D.J."/>
        </authorList>
    </citation>
    <scope>NUCLEOTIDE SEQUENCE [LARGE SCALE GENOMIC DNA]</scope>
    <source>
        <strain>ATCC 19718 / CIP 103999 / KCTC 2705 / NBRC 14298</strain>
    </source>
</reference>
<sequence>MQVILLEKIAKLGSLGSIVNVKPGYARNYLIPQGKARRVTEKVIAEFEAQRAELEKKQSEILAAASAQAARLDGLLVQISQKAGVDGKLFGSVTSANITEELRKQDFPVEKSMIRMPEGQIKQIGDYTVTVVLHSEVSAHITVSVLGETTI</sequence>
<evidence type="ECO:0000255" key="1">
    <source>
        <dbReference type="HAMAP-Rule" id="MF_00503"/>
    </source>
</evidence>
<evidence type="ECO:0000305" key="2"/>
<proteinExistence type="inferred from homology"/>
<organism>
    <name type="scientific">Nitrosomonas europaea (strain ATCC 19718 / CIP 103999 / KCTC 2705 / NBRC 14298)</name>
    <dbReference type="NCBI Taxonomy" id="228410"/>
    <lineage>
        <taxon>Bacteria</taxon>
        <taxon>Pseudomonadati</taxon>
        <taxon>Pseudomonadota</taxon>
        <taxon>Betaproteobacteria</taxon>
        <taxon>Nitrosomonadales</taxon>
        <taxon>Nitrosomonadaceae</taxon>
        <taxon>Nitrosomonas</taxon>
    </lineage>
</organism>
<gene>
    <name evidence="1" type="primary">rplI</name>
    <name type="ordered locus">NE0195</name>
</gene>
<feature type="chain" id="PRO_0000236552" description="Large ribosomal subunit protein bL9">
    <location>
        <begin position="1"/>
        <end position="151"/>
    </location>
</feature>